<name>PANB_PARXL</name>
<protein>
    <recommendedName>
        <fullName evidence="1">3-methyl-2-oxobutanoate hydroxymethyltransferase</fullName>
        <ecNumber evidence="1">2.1.2.11</ecNumber>
    </recommendedName>
    <alternativeName>
        <fullName evidence="1">Ketopantoate hydroxymethyltransferase</fullName>
        <shortName evidence="1">KPHMT</shortName>
    </alternativeName>
</protein>
<organism>
    <name type="scientific">Paraburkholderia xenovorans (strain LB400)</name>
    <dbReference type="NCBI Taxonomy" id="266265"/>
    <lineage>
        <taxon>Bacteria</taxon>
        <taxon>Pseudomonadati</taxon>
        <taxon>Pseudomonadota</taxon>
        <taxon>Betaproteobacteria</taxon>
        <taxon>Burkholderiales</taxon>
        <taxon>Burkholderiaceae</taxon>
        <taxon>Paraburkholderia</taxon>
    </lineage>
</organism>
<accession>Q145E8</accession>
<sequence length="271" mass="28593">MTYLQEASRNAVTVPKLQAMRDAGEKIAMLTCYDASFAALLDRAGVDVLLIGDSLGNVLQGQTTTLPVSLADIAYHTASVARARPAALIVADLPFGTYGTPEDAFRSSVELMRAGAQMVKLEGGEWLADTVRFLVERSIPVCAHVGLTPQSVHAFGGFKVQGKTEAGATQLLRDSLAVQAAGAQLIVMEAIPTLLASDATKQLRIPTIGIGAGLDCSGQVLVLHDMLGIFPGKRPRFVKDFMQGQPSILAAVEAYVAAVKDGSFPGPEHTF</sequence>
<evidence type="ECO:0000255" key="1">
    <source>
        <dbReference type="HAMAP-Rule" id="MF_00156"/>
    </source>
</evidence>
<feature type="chain" id="PRO_0000297238" description="3-methyl-2-oxobutanoate hydroxymethyltransferase">
    <location>
        <begin position="1"/>
        <end position="271"/>
    </location>
</feature>
<feature type="active site" description="Proton acceptor" evidence="1">
    <location>
        <position position="189"/>
    </location>
</feature>
<feature type="binding site" evidence="1">
    <location>
        <begin position="53"/>
        <end position="54"/>
    </location>
    <ligand>
        <name>3-methyl-2-oxobutanoate</name>
        <dbReference type="ChEBI" id="CHEBI:11851"/>
    </ligand>
</feature>
<feature type="binding site" evidence="1">
    <location>
        <position position="53"/>
    </location>
    <ligand>
        <name>Mg(2+)</name>
        <dbReference type="ChEBI" id="CHEBI:18420"/>
    </ligand>
</feature>
<feature type="binding site" evidence="1">
    <location>
        <position position="92"/>
    </location>
    <ligand>
        <name>3-methyl-2-oxobutanoate</name>
        <dbReference type="ChEBI" id="CHEBI:11851"/>
    </ligand>
</feature>
<feature type="binding site" evidence="1">
    <location>
        <position position="92"/>
    </location>
    <ligand>
        <name>Mg(2+)</name>
        <dbReference type="ChEBI" id="CHEBI:18420"/>
    </ligand>
</feature>
<feature type="binding site" evidence="1">
    <location>
        <position position="120"/>
    </location>
    <ligand>
        <name>3-methyl-2-oxobutanoate</name>
        <dbReference type="ChEBI" id="CHEBI:11851"/>
    </ligand>
</feature>
<feature type="binding site" evidence="1">
    <location>
        <position position="122"/>
    </location>
    <ligand>
        <name>Mg(2+)</name>
        <dbReference type="ChEBI" id="CHEBI:18420"/>
    </ligand>
</feature>
<dbReference type="EC" id="2.1.2.11" evidence="1"/>
<dbReference type="EMBL" id="CP000270">
    <property type="protein sequence ID" value="ABE29041.1"/>
    <property type="molecule type" value="Genomic_DNA"/>
</dbReference>
<dbReference type="RefSeq" id="WP_011486861.1">
    <property type="nucleotide sequence ID" value="NC_007951.1"/>
</dbReference>
<dbReference type="SMR" id="Q145E8"/>
<dbReference type="STRING" id="266265.Bxe_A3958"/>
<dbReference type="KEGG" id="bxb:DR64_1633"/>
<dbReference type="KEGG" id="bxe:Bxe_A3958"/>
<dbReference type="PATRIC" id="fig|266265.5.peg.536"/>
<dbReference type="eggNOG" id="COG0413">
    <property type="taxonomic scope" value="Bacteria"/>
</dbReference>
<dbReference type="OrthoDB" id="9781789at2"/>
<dbReference type="UniPathway" id="UPA00028">
    <property type="reaction ID" value="UER00003"/>
</dbReference>
<dbReference type="Proteomes" id="UP000001817">
    <property type="component" value="Chromosome 1"/>
</dbReference>
<dbReference type="GO" id="GO:0005737">
    <property type="term" value="C:cytoplasm"/>
    <property type="evidence" value="ECO:0007669"/>
    <property type="project" value="UniProtKB-SubCell"/>
</dbReference>
<dbReference type="GO" id="GO:0003864">
    <property type="term" value="F:3-methyl-2-oxobutanoate hydroxymethyltransferase activity"/>
    <property type="evidence" value="ECO:0007669"/>
    <property type="project" value="UniProtKB-UniRule"/>
</dbReference>
<dbReference type="GO" id="GO:0000287">
    <property type="term" value="F:magnesium ion binding"/>
    <property type="evidence" value="ECO:0007669"/>
    <property type="project" value="TreeGrafter"/>
</dbReference>
<dbReference type="GO" id="GO:0015940">
    <property type="term" value="P:pantothenate biosynthetic process"/>
    <property type="evidence" value="ECO:0007669"/>
    <property type="project" value="UniProtKB-UniRule"/>
</dbReference>
<dbReference type="CDD" id="cd06557">
    <property type="entry name" value="KPHMT-like"/>
    <property type="match status" value="1"/>
</dbReference>
<dbReference type="FunFam" id="3.20.20.60:FF:000003">
    <property type="entry name" value="3-methyl-2-oxobutanoate hydroxymethyltransferase"/>
    <property type="match status" value="1"/>
</dbReference>
<dbReference type="Gene3D" id="3.20.20.60">
    <property type="entry name" value="Phosphoenolpyruvate-binding domains"/>
    <property type="match status" value="1"/>
</dbReference>
<dbReference type="HAMAP" id="MF_00156">
    <property type="entry name" value="PanB"/>
    <property type="match status" value="1"/>
</dbReference>
<dbReference type="InterPro" id="IPR003700">
    <property type="entry name" value="Pantoate_hydroxy_MeTrfase"/>
</dbReference>
<dbReference type="InterPro" id="IPR015813">
    <property type="entry name" value="Pyrv/PenolPyrv_kinase-like_dom"/>
</dbReference>
<dbReference type="InterPro" id="IPR040442">
    <property type="entry name" value="Pyrv_kinase-like_dom_sf"/>
</dbReference>
<dbReference type="NCBIfam" id="TIGR00222">
    <property type="entry name" value="panB"/>
    <property type="match status" value="1"/>
</dbReference>
<dbReference type="NCBIfam" id="NF001452">
    <property type="entry name" value="PRK00311.1"/>
    <property type="match status" value="1"/>
</dbReference>
<dbReference type="PANTHER" id="PTHR20881">
    <property type="entry name" value="3-METHYL-2-OXOBUTANOATE HYDROXYMETHYLTRANSFERASE"/>
    <property type="match status" value="1"/>
</dbReference>
<dbReference type="PANTHER" id="PTHR20881:SF0">
    <property type="entry name" value="3-METHYL-2-OXOBUTANOATE HYDROXYMETHYLTRANSFERASE"/>
    <property type="match status" value="1"/>
</dbReference>
<dbReference type="Pfam" id="PF02548">
    <property type="entry name" value="Pantoate_transf"/>
    <property type="match status" value="1"/>
</dbReference>
<dbReference type="PIRSF" id="PIRSF000388">
    <property type="entry name" value="Pantoate_hydroxy_MeTrfase"/>
    <property type="match status" value="1"/>
</dbReference>
<dbReference type="SUPFAM" id="SSF51621">
    <property type="entry name" value="Phosphoenolpyruvate/pyruvate domain"/>
    <property type="match status" value="1"/>
</dbReference>
<keyword id="KW-0963">Cytoplasm</keyword>
<keyword id="KW-0460">Magnesium</keyword>
<keyword id="KW-0479">Metal-binding</keyword>
<keyword id="KW-0566">Pantothenate biosynthesis</keyword>
<keyword id="KW-1185">Reference proteome</keyword>
<keyword id="KW-0808">Transferase</keyword>
<comment type="function">
    <text evidence="1">Catalyzes the reversible reaction in which hydroxymethyl group from 5,10-methylenetetrahydrofolate is transferred onto alpha-ketoisovalerate to form ketopantoate.</text>
</comment>
<comment type="catalytic activity">
    <reaction evidence="1">
        <text>3-methyl-2-oxobutanoate + (6R)-5,10-methylene-5,6,7,8-tetrahydrofolate + H2O = 2-dehydropantoate + (6S)-5,6,7,8-tetrahydrofolate</text>
        <dbReference type="Rhea" id="RHEA:11824"/>
        <dbReference type="ChEBI" id="CHEBI:11561"/>
        <dbReference type="ChEBI" id="CHEBI:11851"/>
        <dbReference type="ChEBI" id="CHEBI:15377"/>
        <dbReference type="ChEBI" id="CHEBI:15636"/>
        <dbReference type="ChEBI" id="CHEBI:57453"/>
        <dbReference type="EC" id="2.1.2.11"/>
    </reaction>
</comment>
<comment type="cofactor">
    <cofactor evidence="1">
        <name>Mg(2+)</name>
        <dbReference type="ChEBI" id="CHEBI:18420"/>
    </cofactor>
    <text evidence="1">Binds 1 Mg(2+) ion per subunit.</text>
</comment>
<comment type="pathway">
    <text evidence="1">Cofactor biosynthesis; (R)-pantothenate biosynthesis; (R)-pantoate from 3-methyl-2-oxobutanoate: step 1/2.</text>
</comment>
<comment type="subunit">
    <text evidence="1">Homodecamer; pentamer of dimers.</text>
</comment>
<comment type="subcellular location">
    <subcellularLocation>
        <location evidence="1">Cytoplasm</location>
    </subcellularLocation>
</comment>
<comment type="similarity">
    <text evidence="1">Belongs to the PanB family.</text>
</comment>
<gene>
    <name evidence="1" type="primary">panB</name>
    <name type="ordered locus">Bxeno_A0503</name>
    <name type="ORF">Bxe_A3958</name>
</gene>
<reference key="1">
    <citation type="journal article" date="2006" name="Proc. Natl. Acad. Sci. U.S.A.">
        <title>Burkholderia xenovorans LB400 harbors a multi-replicon, 9.73-Mbp genome shaped for versatility.</title>
        <authorList>
            <person name="Chain P.S.G."/>
            <person name="Denef V.J."/>
            <person name="Konstantinidis K.T."/>
            <person name="Vergez L.M."/>
            <person name="Agullo L."/>
            <person name="Reyes V.L."/>
            <person name="Hauser L."/>
            <person name="Cordova M."/>
            <person name="Gomez L."/>
            <person name="Gonzalez M."/>
            <person name="Land M."/>
            <person name="Lao V."/>
            <person name="Larimer F."/>
            <person name="LiPuma J.J."/>
            <person name="Mahenthiralingam E."/>
            <person name="Malfatti S.A."/>
            <person name="Marx C.J."/>
            <person name="Parnell J.J."/>
            <person name="Ramette A."/>
            <person name="Richardson P."/>
            <person name="Seeger M."/>
            <person name="Smith D."/>
            <person name="Spilker T."/>
            <person name="Sul W.J."/>
            <person name="Tsoi T.V."/>
            <person name="Ulrich L.E."/>
            <person name="Zhulin I.B."/>
            <person name="Tiedje J.M."/>
        </authorList>
    </citation>
    <scope>NUCLEOTIDE SEQUENCE [LARGE SCALE GENOMIC DNA]</scope>
    <source>
        <strain>LB400</strain>
    </source>
</reference>
<proteinExistence type="inferred from homology"/>